<protein>
    <recommendedName>
        <fullName evidence="1">UDP-N-acetylmuramate--L-alanine ligase</fullName>
        <ecNumber evidence="1">6.3.2.8</ecNumber>
    </recommendedName>
    <alternativeName>
        <fullName evidence="1">UDP-N-acetylmuramoyl-L-alanine synthetase</fullName>
    </alternativeName>
</protein>
<name>MURC_RHOPT</name>
<organism>
    <name type="scientific">Rhodopseudomonas palustris (strain TIE-1)</name>
    <dbReference type="NCBI Taxonomy" id="395960"/>
    <lineage>
        <taxon>Bacteria</taxon>
        <taxon>Pseudomonadati</taxon>
        <taxon>Pseudomonadota</taxon>
        <taxon>Alphaproteobacteria</taxon>
        <taxon>Hyphomicrobiales</taxon>
        <taxon>Nitrobacteraceae</taxon>
        <taxon>Rhodopseudomonas</taxon>
    </lineage>
</organism>
<evidence type="ECO:0000255" key="1">
    <source>
        <dbReference type="HAMAP-Rule" id="MF_00046"/>
    </source>
</evidence>
<reference key="1">
    <citation type="submission" date="2008-05" db="EMBL/GenBank/DDBJ databases">
        <title>Complete sequence of Rhodopseudomonas palustris TIE-1.</title>
        <authorList>
            <consortium name="US DOE Joint Genome Institute"/>
            <person name="Lucas S."/>
            <person name="Copeland A."/>
            <person name="Lapidus A."/>
            <person name="Glavina del Rio T."/>
            <person name="Dalin E."/>
            <person name="Tice H."/>
            <person name="Pitluck S."/>
            <person name="Chain P."/>
            <person name="Malfatti S."/>
            <person name="Shin M."/>
            <person name="Vergez L."/>
            <person name="Lang D."/>
            <person name="Schmutz J."/>
            <person name="Larimer F."/>
            <person name="Land M."/>
            <person name="Hauser L."/>
            <person name="Kyrpides N."/>
            <person name="Mikhailova N."/>
            <person name="Emerson D."/>
            <person name="Newman D.K."/>
            <person name="Roden E."/>
            <person name="Richardson P."/>
        </authorList>
    </citation>
    <scope>NUCLEOTIDE SEQUENCE [LARGE SCALE GENOMIC DNA]</scope>
    <source>
        <strain>TIE-1</strain>
    </source>
</reference>
<dbReference type="EC" id="6.3.2.8" evidence="1"/>
<dbReference type="EMBL" id="CP001096">
    <property type="protein sequence ID" value="ACF02543.1"/>
    <property type="molecule type" value="Genomic_DNA"/>
</dbReference>
<dbReference type="RefSeq" id="WP_012496964.1">
    <property type="nucleotide sequence ID" value="NC_011004.1"/>
</dbReference>
<dbReference type="SMR" id="B3QFN0"/>
<dbReference type="KEGG" id="rpt:Rpal_4047"/>
<dbReference type="HOGENOM" id="CLU_028104_2_2_5"/>
<dbReference type="OrthoDB" id="9804126at2"/>
<dbReference type="UniPathway" id="UPA00219"/>
<dbReference type="Proteomes" id="UP000001725">
    <property type="component" value="Chromosome"/>
</dbReference>
<dbReference type="GO" id="GO:0005737">
    <property type="term" value="C:cytoplasm"/>
    <property type="evidence" value="ECO:0007669"/>
    <property type="project" value="UniProtKB-SubCell"/>
</dbReference>
<dbReference type="GO" id="GO:0005524">
    <property type="term" value="F:ATP binding"/>
    <property type="evidence" value="ECO:0007669"/>
    <property type="project" value="UniProtKB-UniRule"/>
</dbReference>
<dbReference type="GO" id="GO:0008763">
    <property type="term" value="F:UDP-N-acetylmuramate-L-alanine ligase activity"/>
    <property type="evidence" value="ECO:0007669"/>
    <property type="project" value="UniProtKB-UniRule"/>
</dbReference>
<dbReference type="GO" id="GO:0051301">
    <property type="term" value="P:cell division"/>
    <property type="evidence" value="ECO:0007669"/>
    <property type="project" value="UniProtKB-KW"/>
</dbReference>
<dbReference type="GO" id="GO:0071555">
    <property type="term" value="P:cell wall organization"/>
    <property type="evidence" value="ECO:0007669"/>
    <property type="project" value="UniProtKB-KW"/>
</dbReference>
<dbReference type="GO" id="GO:0009252">
    <property type="term" value="P:peptidoglycan biosynthetic process"/>
    <property type="evidence" value="ECO:0007669"/>
    <property type="project" value="UniProtKB-UniRule"/>
</dbReference>
<dbReference type="GO" id="GO:0008360">
    <property type="term" value="P:regulation of cell shape"/>
    <property type="evidence" value="ECO:0007669"/>
    <property type="project" value="UniProtKB-KW"/>
</dbReference>
<dbReference type="Gene3D" id="3.90.190.20">
    <property type="entry name" value="Mur ligase, C-terminal domain"/>
    <property type="match status" value="1"/>
</dbReference>
<dbReference type="Gene3D" id="3.40.1190.10">
    <property type="entry name" value="Mur-like, catalytic domain"/>
    <property type="match status" value="1"/>
</dbReference>
<dbReference type="Gene3D" id="3.40.50.720">
    <property type="entry name" value="NAD(P)-binding Rossmann-like Domain"/>
    <property type="match status" value="1"/>
</dbReference>
<dbReference type="HAMAP" id="MF_00046">
    <property type="entry name" value="MurC"/>
    <property type="match status" value="1"/>
</dbReference>
<dbReference type="InterPro" id="IPR036565">
    <property type="entry name" value="Mur-like_cat_sf"/>
</dbReference>
<dbReference type="InterPro" id="IPR004101">
    <property type="entry name" value="Mur_ligase_C"/>
</dbReference>
<dbReference type="InterPro" id="IPR036615">
    <property type="entry name" value="Mur_ligase_C_dom_sf"/>
</dbReference>
<dbReference type="InterPro" id="IPR013221">
    <property type="entry name" value="Mur_ligase_cen"/>
</dbReference>
<dbReference type="InterPro" id="IPR000713">
    <property type="entry name" value="Mur_ligase_N"/>
</dbReference>
<dbReference type="InterPro" id="IPR050061">
    <property type="entry name" value="MurCDEF_pg_biosynth"/>
</dbReference>
<dbReference type="InterPro" id="IPR005758">
    <property type="entry name" value="UDP-N-AcMur_Ala_ligase_MurC"/>
</dbReference>
<dbReference type="NCBIfam" id="TIGR01082">
    <property type="entry name" value="murC"/>
    <property type="match status" value="1"/>
</dbReference>
<dbReference type="PANTHER" id="PTHR43445:SF3">
    <property type="entry name" value="UDP-N-ACETYLMURAMATE--L-ALANINE LIGASE"/>
    <property type="match status" value="1"/>
</dbReference>
<dbReference type="PANTHER" id="PTHR43445">
    <property type="entry name" value="UDP-N-ACETYLMURAMATE--L-ALANINE LIGASE-RELATED"/>
    <property type="match status" value="1"/>
</dbReference>
<dbReference type="Pfam" id="PF01225">
    <property type="entry name" value="Mur_ligase"/>
    <property type="match status" value="1"/>
</dbReference>
<dbReference type="Pfam" id="PF02875">
    <property type="entry name" value="Mur_ligase_C"/>
    <property type="match status" value="1"/>
</dbReference>
<dbReference type="Pfam" id="PF08245">
    <property type="entry name" value="Mur_ligase_M"/>
    <property type="match status" value="1"/>
</dbReference>
<dbReference type="SUPFAM" id="SSF51984">
    <property type="entry name" value="MurCD N-terminal domain"/>
    <property type="match status" value="1"/>
</dbReference>
<dbReference type="SUPFAM" id="SSF53623">
    <property type="entry name" value="MurD-like peptide ligases, catalytic domain"/>
    <property type="match status" value="1"/>
</dbReference>
<dbReference type="SUPFAM" id="SSF53244">
    <property type="entry name" value="MurD-like peptide ligases, peptide-binding domain"/>
    <property type="match status" value="1"/>
</dbReference>
<gene>
    <name evidence="1" type="primary">murC</name>
    <name type="ordered locus">Rpal_4047</name>
</gene>
<keyword id="KW-0067">ATP-binding</keyword>
<keyword id="KW-0131">Cell cycle</keyword>
<keyword id="KW-0132">Cell division</keyword>
<keyword id="KW-0133">Cell shape</keyword>
<keyword id="KW-0961">Cell wall biogenesis/degradation</keyword>
<keyword id="KW-0963">Cytoplasm</keyword>
<keyword id="KW-0436">Ligase</keyword>
<keyword id="KW-0547">Nucleotide-binding</keyword>
<keyword id="KW-0573">Peptidoglycan synthesis</keyword>
<accession>B3QFN0</accession>
<comment type="function">
    <text evidence="1">Cell wall formation.</text>
</comment>
<comment type="catalytic activity">
    <reaction evidence="1">
        <text>UDP-N-acetyl-alpha-D-muramate + L-alanine + ATP = UDP-N-acetyl-alpha-D-muramoyl-L-alanine + ADP + phosphate + H(+)</text>
        <dbReference type="Rhea" id="RHEA:23372"/>
        <dbReference type="ChEBI" id="CHEBI:15378"/>
        <dbReference type="ChEBI" id="CHEBI:30616"/>
        <dbReference type="ChEBI" id="CHEBI:43474"/>
        <dbReference type="ChEBI" id="CHEBI:57972"/>
        <dbReference type="ChEBI" id="CHEBI:70757"/>
        <dbReference type="ChEBI" id="CHEBI:83898"/>
        <dbReference type="ChEBI" id="CHEBI:456216"/>
        <dbReference type="EC" id="6.3.2.8"/>
    </reaction>
</comment>
<comment type="pathway">
    <text evidence="1">Cell wall biogenesis; peptidoglycan biosynthesis.</text>
</comment>
<comment type="subcellular location">
    <subcellularLocation>
        <location evidence="1">Cytoplasm</location>
    </subcellularLocation>
</comment>
<comment type="similarity">
    <text evidence="1">Belongs to the MurCDEF family.</text>
</comment>
<sequence>MRLPRHIGPIHFVGIGGIGMSGIAEVLCNLGYTVQGSDASESANVNRLREKGIQIHVGHQADNIKGADVLVVSTAIKRDNPELLAARAQRIPVVRRAEMLAELMRLKSCVAIAGTHGKTTTTSMVAALLDAGDLDPTVINGGIINAYGTNARLGGGDWMVVEADESDGTFLKLPADVAIVTNVDPEHLDHFKTFDAVQDAFRNFVENVPFYGFAVMCIDHPVVQTLVGKIEDRRIITYGENPQADARLLDLAASGGGSTFKVAFRDRKAGTAHEIADLKLPMPGRHNALNATAAIAVAHELGLSDDTIRKALAAFGGVRRRFTKTGEWNGVTIIDDYGHHPVEIAAVLKAARQSTSGKVIAVVQPHRFSRLQSLFEEFCTCFNDADAVIVADVYPAGEAPIEGIDRDHFVLGLRAHGHRDVVALQDSASLAGVVAGLAHSGDYVVCLGAGNITQWAYALPGELKALG</sequence>
<proteinExistence type="inferred from homology"/>
<feature type="chain" id="PRO_1000091127" description="UDP-N-acetylmuramate--L-alanine ligase">
    <location>
        <begin position="1"/>
        <end position="467"/>
    </location>
</feature>
<feature type="binding site" evidence="1">
    <location>
        <begin position="114"/>
        <end position="120"/>
    </location>
    <ligand>
        <name>ATP</name>
        <dbReference type="ChEBI" id="CHEBI:30616"/>
    </ligand>
</feature>